<comment type="function">
    <text evidence="1">Involved in pre-mRNA splicing.</text>
</comment>
<comment type="subunit">
    <text evidence="1">Associated with the spliceosome.</text>
</comment>
<comment type="subcellular location">
    <subcellularLocation>
        <location evidence="1">Cytoplasm</location>
    </subcellularLocation>
    <subcellularLocation>
        <location evidence="1">Nucleus</location>
    </subcellularLocation>
</comment>
<comment type="similarity">
    <text evidence="4">Belongs to the CWC22 family.</text>
</comment>
<protein>
    <recommendedName>
        <fullName>Pre-mRNA-splicing factor CWC22</fullName>
    </recommendedName>
</protein>
<organism>
    <name type="scientific">Pyricularia oryzae (strain 70-15 / ATCC MYA-4617 / FGSC 8958)</name>
    <name type="common">Rice blast fungus</name>
    <name type="synonym">Magnaporthe oryzae</name>
    <dbReference type="NCBI Taxonomy" id="242507"/>
    <lineage>
        <taxon>Eukaryota</taxon>
        <taxon>Fungi</taxon>
        <taxon>Dikarya</taxon>
        <taxon>Ascomycota</taxon>
        <taxon>Pezizomycotina</taxon>
        <taxon>Sordariomycetes</taxon>
        <taxon>Sordariomycetidae</taxon>
        <taxon>Magnaporthales</taxon>
        <taxon>Pyriculariaceae</taxon>
        <taxon>Pyricularia</taxon>
    </lineage>
</organism>
<feature type="chain" id="PRO_0000215673" description="Pre-mRNA-splicing factor CWC22">
    <location>
        <begin position="1"/>
        <end position="907"/>
    </location>
</feature>
<feature type="domain" description="MIF4G" evidence="2">
    <location>
        <begin position="159"/>
        <end position="342"/>
    </location>
</feature>
<feature type="domain" description="MI" evidence="2">
    <location>
        <begin position="444"/>
        <end position="560"/>
    </location>
</feature>
<feature type="region of interest" description="Disordered" evidence="3">
    <location>
        <begin position="1"/>
        <end position="114"/>
    </location>
</feature>
<feature type="region of interest" description="Disordered" evidence="3">
    <location>
        <begin position="405"/>
        <end position="433"/>
    </location>
</feature>
<feature type="region of interest" description="Disordered" evidence="3">
    <location>
        <begin position="639"/>
        <end position="907"/>
    </location>
</feature>
<feature type="compositionally biased region" description="Basic and acidic residues" evidence="3">
    <location>
        <begin position="1"/>
        <end position="10"/>
    </location>
</feature>
<feature type="compositionally biased region" description="Pro residues" evidence="3">
    <location>
        <begin position="13"/>
        <end position="22"/>
    </location>
</feature>
<feature type="compositionally biased region" description="Basic and acidic residues" evidence="3">
    <location>
        <begin position="43"/>
        <end position="56"/>
    </location>
</feature>
<feature type="compositionally biased region" description="Basic and acidic residues" evidence="3">
    <location>
        <begin position="68"/>
        <end position="81"/>
    </location>
</feature>
<feature type="compositionally biased region" description="Acidic residues" evidence="3">
    <location>
        <begin position="406"/>
        <end position="425"/>
    </location>
</feature>
<feature type="compositionally biased region" description="Low complexity" evidence="3">
    <location>
        <begin position="655"/>
        <end position="674"/>
    </location>
</feature>
<feature type="compositionally biased region" description="Basic residues" evidence="3">
    <location>
        <begin position="675"/>
        <end position="686"/>
    </location>
</feature>
<feature type="compositionally biased region" description="Low complexity" evidence="3">
    <location>
        <begin position="687"/>
        <end position="731"/>
    </location>
</feature>
<feature type="compositionally biased region" description="Low complexity" evidence="3">
    <location>
        <begin position="753"/>
        <end position="772"/>
    </location>
</feature>
<feature type="compositionally biased region" description="Basic residues" evidence="3">
    <location>
        <begin position="773"/>
        <end position="783"/>
    </location>
</feature>
<feature type="compositionally biased region" description="Low complexity" evidence="3">
    <location>
        <begin position="817"/>
        <end position="830"/>
    </location>
</feature>
<feature type="compositionally biased region" description="Basic and acidic residues" evidence="3">
    <location>
        <begin position="837"/>
        <end position="850"/>
    </location>
</feature>
<feature type="compositionally biased region" description="Low complexity" evidence="3">
    <location>
        <begin position="869"/>
        <end position="879"/>
    </location>
</feature>
<feature type="compositionally biased region" description="Basic residues" evidence="3">
    <location>
        <begin position="898"/>
        <end position="907"/>
    </location>
</feature>
<evidence type="ECO:0000250" key="1"/>
<evidence type="ECO:0000255" key="2">
    <source>
        <dbReference type="PROSITE-ProRule" id="PRU00698"/>
    </source>
</evidence>
<evidence type="ECO:0000256" key="3">
    <source>
        <dbReference type="SAM" id="MobiDB-lite"/>
    </source>
</evidence>
<evidence type="ECO:0000305" key="4"/>
<keyword id="KW-0963">Cytoplasm</keyword>
<keyword id="KW-0507">mRNA processing</keyword>
<keyword id="KW-0508">mRNA splicing</keyword>
<keyword id="KW-0539">Nucleus</keyword>
<keyword id="KW-1185">Reference proteome</keyword>
<keyword id="KW-0747">Spliceosome</keyword>
<name>CWC22_PYRO7</name>
<dbReference type="EMBL" id="CM001232">
    <property type="protein sequence ID" value="EHA53999.1"/>
    <property type="molecule type" value="Genomic_DNA"/>
</dbReference>
<dbReference type="RefSeq" id="XP_003713806.1">
    <property type="nucleotide sequence ID" value="XM_003713758.1"/>
</dbReference>
<dbReference type="SMR" id="Q52B63"/>
<dbReference type="FunCoup" id="Q52B63">
    <property type="interactions" value="895"/>
</dbReference>
<dbReference type="STRING" id="242507.Q52B63"/>
<dbReference type="EnsemblFungi" id="MGG_10180T0">
    <property type="protein sequence ID" value="MGG_10180T0"/>
    <property type="gene ID" value="MGG_10180"/>
</dbReference>
<dbReference type="GeneID" id="2681807"/>
<dbReference type="KEGG" id="mgr:MGG_10180"/>
<dbReference type="VEuPathDB" id="FungiDB:MGG_10180"/>
<dbReference type="eggNOG" id="KOG2140">
    <property type="taxonomic scope" value="Eukaryota"/>
</dbReference>
<dbReference type="HOGENOM" id="CLU_006308_0_2_1"/>
<dbReference type="InParanoid" id="Q52B63"/>
<dbReference type="OMA" id="ILTEDMR"/>
<dbReference type="OrthoDB" id="3938623at2759"/>
<dbReference type="Proteomes" id="UP000009058">
    <property type="component" value="Chromosome 2"/>
</dbReference>
<dbReference type="GO" id="GO:0071013">
    <property type="term" value="C:catalytic step 2 spliceosome"/>
    <property type="evidence" value="ECO:0007669"/>
    <property type="project" value="TreeGrafter"/>
</dbReference>
<dbReference type="GO" id="GO:0005737">
    <property type="term" value="C:cytoplasm"/>
    <property type="evidence" value="ECO:0007669"/>
    <property type="project" value="UniProtKB-SubCell"/>
</dbReference>
<dbReference type="GO" id="GO:0003723">
    <property type="term" value="F:RNA binding"/>
    <property type="evidence" value="ECO:0007669"/>
    <property type="project" value="InterPro"/>
</dbReference>
<dbReference type="GO" id="GO:0000398">
    <property type="term" value="P:mRNA splicing, via spliceosome"/>
    <property type="evidence" value="ECO:0007669"/>
    <property type="project" value="TreeGrafter"/>
</dbReference>
<dbReference type="FunFam" id="1.25.40.180:FF:000004">
    <property type="entry name" value="pre-mRNA-splicing factor CWC22 homolog"/>
    <property type="match status" value="1"/>
</dbReference>
<dbReference type="Gene3D" id="1.25.40.180">
    <property type="match status" value="1"/>
</dbReference>
<dbReference type="InterPro" id="IPR016024">
    <property type="entry name" value="ARM-type_fold"/>
</dbReference>
<dbReference type="InterPro" id="IPR050781">
    <property type="entry name" value="CWC22_splicing_factor"/>
</dbReference>
<dbReference type="InterPro" id="IPR003891">
    <property type="entry name" value="Initiation_fac_eIF4g_MI"/>
</dbReference>
<dbReference type="InterPro" id="IPR003890">
    <property type="entry name" value="MIF4G-like_typ-3"/>
</dbReference>
<dbReference type="PANTHER" id="PTHR18034">
    <property type="entry name" value="CELL CYCLE CONTROL PROTEIN CWF22-RELATED"/>
    <property type="match status" value="1"/>
</dbReference>
<dbReference type="PANTHER" id="PTHR18034:SF3">
    <property type="entry name" value="PRE-MRNA-SPLICING FACTOR CWC22 HOMOLOG"/>
    <property type="match status" value="1"/>
</dbReference>
<dbReference type="Pfam" id="PF02847">
    <property type="entry name" value="MA3"/>
    <property type="match status" value="1"/>
</dbReference>
<dbReference type="Pfam" id="PF02854">
    <property type="entry name" value="MIF4G"/>
    <property type="match status" value="1"/>
</dbReference>
<dbReference type="SMART" id="SM00544">
    <property type="entry name" value="MA3"/>
    <property type="match status" value="1"/>
</dbReference>
<dbReference type="SMART" id="SM00543">
    <property type="entry name" value="MIF4G"/>
    <property type="match status" value="1"/>
</dbReference>
<dbReference type="SUPFAM" id="SSF48371">
    <property type="entry name" value="ARM repeat"/>
    <property type="match status" value="1"/>
</dbReference>
<dbReference type="PROSITE" id="PS51366">
    <property type="entry name" value="MI"/>
    <property type="match status" value="1"/>
</dbReference>
<sequence>MSSPDARDARSPSPRPRSPSPAAPSRSWSRSRHESPSRSPAPMRERREEEGNEQRSPRQIAHHPRSPRGSDRRAEPRRRDAGGGGGDKYRPAKARKQRSPPPAATEEQKQAAAKAEYERLLTARSGGTYVPPARLRALQAQITDKTSMAYQRMAWDALKKSINGLINKVNVSNIKPLVPELFNENLVRGRGLFCQSAIKAQAASLPFTPIYAALVAVVNTKLPQVGELLLRRLVLRFRKAFRRNDKAVCLSATTFVAHLVNQQVAHEMVAGQMLLLLLNKPTDDSVEIAVGLTREVGQFLEEMNAAIANVVFDRFRDILHEADIAKRTQYMIEVLFQTRKDRFKDNPAIRDELDLVEEDDQIKHFVELDGELDAQDGLNIFKFDPEYEENEEKYKKLKAEILGEGSDYEDDSDDEGSDSSDDEPAAAEQKAMDIQDRSNADLVALRRTIYLTLMSSMDPEEAVHKLMKINLPQGLEGELPSLVVESCAQERTYSKFYGAIGERLAKINRLWTDLFEKSFEHYYTSIHRYETNRLRNIARFFGHMFSSDAIGWHCLSVIHLNEEETTSASRIFIKILFQEISEAMGMPKLHTRTKDAALQPYMEGLFPRDTARNIRFSINYFTSIGMGVLTEDSREFLQNMPKPALPAPPPDSDSESSSSYSSYTGSSYSRSRSPSPRRRSYSRSRSRSVTPRRTNSNGRNNARSPSRSVSRSISRSRSPAPIRGRSYSRSVSRSRSRSYSRSVSRSPTPPRRQAPAQQRGRQRSYTPSDRSRSRSYSRSRSPRGRSYTRSPDRAGPQASTAPRSGGPPRKAGSVDNRSPLSRSPSGSRSPSPRRRRDSPSRSPVRDRESGGRAAAAAPGNSEARRGRSYSRSPSRTRSPSPAPSRRRRRDSSSDASAPRKRRRESSR</sequence>
<gene>
    <name type="primary">CWC22</name>
    <name type="ORF">MGG_10180</name>
</gene>
<proteinExistence type="inferred from homology"/>
<reference key="1">
    <citation type="journal article" date="2005" name="Nature">
        <title>The genome sequence of the rice blast fungus Magnaporthe grisea.</title>
        <authorList>
            <person name="Dean R.A."/>
            <person name="Talbot N.J."/>
            <person name="Ebbole D.J."/>
            <person name="Farman M.L."/>
            <person name="Mitchell T.K."/>
            <person name="Orbach M.J."/>
            <person name="Thon M.R."/>
            <person name="Kulkarni R."/>
            <person name="Xu J.-R."/>
            <person name="Pan H."/>
            <person name="Read N.D."/>
            <person name="Lee Y.-H."/>
            <person name="Carbone I."/>
            <person name="Brown D."/>
            <person name="Oh Y.Y."/>
            <person name="Donofrio N."/>
            <person name="Jeong J.S."/>
            <person name="Soanes D.M."/>
            <person name="Djonovic S."/>
            <person name="Kolomiets E."/>
            <person name="Rehmeyer C."/>
            <person name="Li W."/>
            <person name="Harding M."/>
            <person name="Kim S."/>
            <person name="Lebrun M.-H."/>
            <person name="Bohnert H."/>
            <person name="Coughlan S."/>
            <person name="Butler J."/>
            <person name="Calvo S.E."/>
            <person name="Ma L.-J."/>
            <person name="Nicol R."/>
            <person name="Purcell S."/>
            <person name="Nusbaum C."/>
            <person name="Galagan J.E."/>
            <person name="Birren B.W."/>
        </authorList>
    </citation>
    <scope>NUCLEOTIDE SEQUENCE [LARGE SCALE GENOMIC DNA]</scope>
    <source>
        <strain>70-15 / ATCC MYA-4617 / FGSC 8958</strain>
    </source>
</reference>
<accession>Q52B63</accession>
<accession>A4RM83</accession>
<accession>G4MUM6</accession>